<name>TPP7_ORYSJ</name>
<proteinExistence type="evidence at transcript level"/>
<gene>
    <name type="primary">TPP7</name>
    <name type="ordered locus">Os09g0369400</name>
    <name type="ordered locus">LOC_Os09g20390</name>
    <name type="ORF">OJ1759_F09.33</name>
    <name type="ORF">P0564H06.39</name>
</gene>
<sequence>MAKASVVVPEQVGAAAAAQVGCPCPGTTLFPYPPPRAGIAVRRKCLQAAQQLELGAGLRGGWVESMRASSPTHAKAAAALAAGVDEEHAAWMARHPSALGEFEKVVAASKGKQIVMFLDYDGTLSPIVDDPDAAFMSETMRMAVRSVAKHFPTAIVSGRCRDKVFEFVKLAELYYAGSHGMDIKGPASRHAAAKSPPHNKGVLFQPASEFLPMIEQVHQRLEQATSSIPGAKVENNKFCVSVHFRCVDEKSWGALAETVRRVVREFPRLRLSQGRMVFEVRPTIKWDKGKALEFLLDSLGFADCSDVLPVYIGDDRTDEDAFKVLRRRGQGVGILVSKHPKETSASFSLQEPAEVMEFLLRLVEWNRLSRTRLRL</sequence>
<organism>
    <name type="scientific">Oryza sativa subsp. japonica</name>
    <name type="common">Rice</name>
    <dbReference type="NCBI Taxonomy" id="39947"/>
    <lineage>
        <taxon>Eukaryota</taxon>
        <taxon>Viridiplantae</taxon>
        <taxon>Streptophyta</taxon>
        <taxon>Embryophyta</taxon>
        <taxon>Tracheophyta</taxon>
        <taxon>Spermatophyta</taxon>
        <taxon>Magnoliopsida</taxon>
        <taxon>Liliopsida</taxon>
        <taxon>Poales</taxon>
        <taxon>Poaceae</taxon>
        <taxon>BOP clade</taxon>
        <taxon>Oryzoideae</taxon>
        <taxon>Oryzeae</taxon>
        <taxon>Oryzinae</taxon>
        <taxon>Oryza</taxon>
        <taxon>Oryza sativa</taxon>
    </lineage>
</organism>
<evidence type="ECO:0000250" key="1"/>
<evidence type="ECO:0000305" key="2"/>
<dbReference type="EC" id="3.1.3.12"/>
<dbReference type="EMBL" id="AP005525">
    <property type="protein sequence ID" value="BAD25928.1"/>
    <property type="status" value="ALT_SEQ"/>
    <property type="molecule type" value="Genomic_DNA"/>
</dbReference>
<dbReference type="EMBL" id="AP005580">
    <property type="protein sequence ID" value="BAD25985.1"/>
    <property type="status" value="ALT_SEQ"/>
    <property type="molecule type" value="Genomic_DNA"/>
</dbReference>
<dbReference type="EMBL" id="AP008215">
    <property type="protein sequence ID" value="BAF24928.1"/>
    <property type="status" value="ALT_SEQ"/>
    <property type="molecule type" value="Genomic_DNA"/>
</dbReference>
<dbReference type="EMBL" id="AP014965">
    <property type="protein sequence ID" value="BAT07760.1"/>
    <property type="molecule type" value="Genomic_DNA"/>
</dbReference>
<dbReference type="EMBL" id="AK288009">
    <property type="status" value="NOT_ANNOTATED_CDS"/>
    <property type="molecule type" value="mRNA"/>
</dbReference>
<dbReference type="RefSeq" id="XP_015651449.1">
    <property type="nucleotide sequence ID" value="XM_015795963.1"/>
</dbReference>
<dbReference type="SMR" id="Q6H5L4"/>
<dbReference type="FunCoup" id="Q6H5L4">
    <property type="interactions" value="141"/>
</dbReference>
<dbReference type="STRING" id="39947.Q6H5L4"/>
<dbReference type="PaxDb" id="39947-Q6H5L4"/>
<dbReference type="EnsemblPlants" id="Os09t0369400-01">
    <property type="protein sequence ID" value="Os09t0369400-01"/>
    <property type="gene ID" value="Os09g0369400"/>
</dbReference>
<dbReference type="Gramene" id="Os09t0369400-01">
    <property type="protein sequence ID" value="Os09t0369400-01"/>
    <property type="gene ID" value="Os09g0369400"/>
</dbReference>
<dbReference type="KEGG" id="dosa:Os09g0369400"/>
<dbReference type="eggNOG" id="KOG1050">
    <property type="taxonomic scope" value="Eukaryota"/>
</dbReference>
<dbReference type="HOGENOM" id="CLU_037265_1_1_1"/>
<dbReference type="InParanoid" id="Q6H5L4"/>
<dbReference type="OMA" id="EEHAAWM"/>
<dbReference type="OrthoDB" id="411251at2759"/>
<dbReference type="BRENDA" id="3.1.3.12">
    <property type="organism ID" value="8948"/>
</dbReference>
<dbReference type="UniPathway" id="UPA00299"/>
<dbReference type="Proteomes" id="UP000000763">
    <property type="component" value="Chromosome 9"/>
</dbReference>
<dbReference type="Proteomes" id="UP000059680">
    <property type="component" value="Chromosome 9"/>
</dbReference>
<dbReference type="GO" id="GO:0004805">
    <property type="term" value="F:trehalose-phosphatase activity"/>
    <property type="evidence" value="ECO:0000318"/>
    <property type="project" value="GO_Central"/>
</dbReference>
<dbReference type="GO" id="GO:0005992">
    <property type="term" value="P:trehalose biosynthetic process"/>
    <property type="evidence" value="ECO:0000318"/>
    <property type="project" value="GO_Central"/>
</dbReference>
<dbReference type="CDD" id="cd01627">
    <property type="entry name" value="HAD_TPP"/>
    <property type="match status" value="1"/>
</dbReference>
<dbReference type="FunFam" id="3.30.70.1020:FF:000004">
    <property type="entry name" value="Trehalose 6-phosphate phosphatase"/>
    <property type="match status" value="1"/>
</dbReference>
<dbReference type="FunFam" id="3.40.50.1000:FF:000073">
    <property type="entry name" value="Trehalose 6-phosphate phosphatase"/>
    <property type="match status" value="1"/>
</dbReference>
<dbReference type="FunFam" id="3.40.50.1000:FF:000161">
    <property type="entry name" value="Trehalose 6-phosphate phosphatase"/>
    <property type="match status" value="1"/>
</dbReference>
<dbReference type="Gene3D" id="3.40.50.1000">
    <property type="entry name" value="HAD superfamily/HAD-like"/>
    <property type="match status" value="2"/>
</dbReference>
<dbReference type="InterPro" id="IPR036412">
    <property type="entry name" value="HAD-like_sf"/>
</dbReference>
<dbReference type="InterPro" id="IPR006379">
    <property type="entry name" value="HAD-SF_hydro_IIB"/>
</dbReference>
<dbReference type="InterPro" id="IPR023214">
    <property type="entry name" value="HAD_sf"/>
</dbReference>
<dbReference type="InterPro" id="IPR044651">
    <property type="entry name" value="OTSB-like"/>
</dbReference>
<dbReference type="InterPro" id="IPR003337">
    <property type="entry name" value="Trehalose_PPase"/>
</dbReference>
<dbReference type="NCBIfam" id="TIGR01484">
    <property type="entry name" value="HAD-SF-IIB"/>
    <property type="match status" value="1"/>
</dbReference>
<dbReference type="NCBIfam" id="TIGR00685">
    <property type="entry name" value="T6PP"/>
    <property type="match status" value="1"/>
</dbReference>
<dbReference type="PANTHER" id="PTHR43768">
    <property type="entry name" value="TREHALOSE 6-PHOSPHATE PHOSPHATASE"/>
    <property type="match status" value="1"/>
</dbReference>
<dbReference type="PANTHER" id="PTHR43768:SF3">
    <property type="entry name" value="TREHALOSE 6-PHOSPHATE PHOSPHATASE"/>
    <property type="match status" value="1"/>
</dbReference>
<dbReference type="Pfam" id="PF02358">
    <property type="entry name" value="Trehalose_PPase"/>
    <property type="match status" value="1"/>
</dbReference>
<dbReference type="SUPFAM" id="SSF56784">
    <property type="entry name" value="HAD-like"/>
    <property type="match status" value="1"/>
</dbReference>
<keyword id="KW-0378">Hydrolase</keyword>
<keyword id="KW-1185">Reference proteome</keyword>
<keyword id="KW-0346">Stress response</keyword>
<accession>Q6H5L4</accession>
<accession>A0A0P0XM81</accession>
<accession>Q0J287</accession>
<comment type="function">
    <text evidence="1">Removes the phosphate from trehalose 6-phosphate to produce free trehalose. Trehalose accumulation in plant may improve abiotic stress tolerance (By similarity).</text>
</comment>
<comment type="catalytic activity">
    <reaction>
        <text>alpha,alpha-trehalose 6-phosphate + H2O = alpha,alpha-trehalose + phosphate</text>
        <dbReference type="Rhea" id="RHEA:23420"/>
        <dbReference type="ChEBI" id="CHEBI:15377"/>
        <dbReference type="ChEBI" id="CHEBI:16551"/>
        <dbReference type="ChEBI" id="CHEBI:43474"/>
        <dbReference type="ChEBI" id="CHEBI:58429"/>
        <dbReference type="EC" id="3.1.3.12"/>
    </reaction>
</comment>
<comment type="cofactor">
    <cofactor evidence="1">
        <name>a divalent metal cation</name>
        <dbReference type="ChEBI" id="CHEBI:60240"/>
    </cofactor>
</comment>
<comment type="pathway">
    <text>Glycan biosynthesis; trehalose biosynthesis.</text>
</comment>
<comment type="similarity">
    <text evidence="2">Belongs to the trehalose phosphatase family.</text>
</comment>
<comment type="sequence caution" evidence="2">
    <conflict type="erroneous gene model prediction">
        <sequence resource="EMBL-CDS" id="BAD25928"/>
    </conflict>
</comment>
<comment type="sequence caution" evidence="2">
    <conflict type="erroneous gene model prediction">
        <sequence resource="EMBL-CDS" id="BAD25985"/>
    </conflict>
</comment>
<comment type="sequence caution" evidence="2">
    <conflict type="erroneous gene model prediction">
        <sequence resource="EMBL-CDS" id="BAF24928"/>
    </conflict>
</comment>
<feature type="chain" id="PRO_0000417659" description="Probable trehalose-phosphate phosphatase 7">
    <location>
        <begin position="1"/>
        <end position="375"/>
    </location>
</feature>
<reference key="1">
    <citation type="journal article" date="2005" name="Nature">
        <title>The map-based sequence of the rice genome.</title>
        <authorList>
            <consortium name="International rice genome sequencing project (IRGSP)"/>
        </authorList>
    </citation>
    <scope>NUCLEOTIDE SEQUENCE [LARGE SCALE GENOMIC DNA]</scope>
    <source>
        <strain>cv. Nipponbare</strain>
    </source>
</reference>
<reference key="2">
    <citation type="journal article" date="2008" name="Nucleic Acids Res.">
        <title>The rice annotation project database (RAP-DB): 2008 update.</title>
        <authorList>
            <consortium name="The rice annotation project (RAP)"/>
        </authorList>
    </citation>
    <scope>GENOME REANNOTATION</scope>
    <source>
        <strain>cv. Nipponbare</strain>
    </source>
</reference>
<reference key="3">
    <citation type="journal article" date="2013" name="Rice">
        <title>Improvement of the Oryza sativa Nipponbare reference genome using next generation sequence and optical map data.</title>
        <authorList>
            <person name="Kawahara Y."/>
            <person name="de la Bastide M."/>
            <person name="Hamilton J.P."/>
            <person name="Kanamori H."/>
            <person name="McCombie W.R."/>
            <person name="Ouyang S."/>
            <person name="Schwartz D.C."/>
            <person name="Tanaka T."/>
            <person name="Wu J."/>
            <person name="Zhou S."/>
            <person name="Childs K.L."/>
            <person name="Davidson R.M."/>
            <person name="Lin H."/>
            <person name="Quesada-Ocampo L."/>
            <person name="Vaillancourt B."/>
            <person name="Sakai H."/>
            <person name="Lee S.S."/>
            <person name="Kim J."/>
            <person name="Numa H."/>
            <person name="Itoh T."/>
            <person name="Buell C.R."/>
            <person name="Matsumoto T."/>
        </authorList>
    </citation>
    <scope>GENOME REANNOTATION</scope>
    <source>
        <strain>cv. Nipponbare</strain>
    </source>
</reference>
<reference key="4">
    <citation type="submission" date="2007-09" db="EMBL/GenBank/DDBJ databases">
        <title>Oryza sativa full length cDNA.</title>
        <authorList>
            <consortium name="The rice full-length cDNA consortium"/>
        </authorList>
    </citation>
    <scope>NUCLEOTIDE SEQUENCE [LARGE SCALE MRNA]</scope>
    <source>
        <strain>cv. Nipponbare</strain>
    </source>
</reference>
<reference key="5">
    <citation type="journal article" date="2005" name="Plant Mol. Biol.">
        <title>Functional identification of a trehalose 6-phosphate phosphatase gene that is involved in transient induction of trehalose biosynthesis during chilling stress in rice.</title>
        <authorList>
            <person name="Pramanik M.H."/>
            <person name="Imai R."/>
        </authorList>
    </citation>
    <scope>GENE FAMILY</scope>
    <scope>NOMENCLATURE</scope>
    <source>
        <strain>cv. Yukihikari</strain>
    </source>
</reference>
<protein>
    <recommendedName>
        <fullName>Probable trehalose-phosphate phosphatase 7</fullName>
        <shortName>OsTPP7</shortName>
        <ecNumber>3.1.3.12</ecNumber>
    </recommendedName>
    <alternativeName>
        <fullName>Trehalose 6-phosphate phosphatase</fullName>
    </alternativeName>
</protein>